<keyword id="KW-0025">Alternative splicing</keyword>
<keyword id="KW-0472">Membrane</keyword>
<keyword id="KW-1185">Reference proteome</keyword>
<keyword id="KW-0812">Transmembrane</keyword>
<keyword id="KW-1133">Transmembrane helix</keyword>
<keyword id="KW-0813">Transport</keyword>
<feature type="chain" id="PRO_0000294462" description="Putative transporter SVOPL">
    <location>
        <begin position="1"/>
        <end position="494"/>
    </location>
</feature>
<feature type="transmembrane region" description="Helical" evidence="1">
    <location>
        <begin position="48"/>
        <end position="68"/>
    </location>
</feature>
<feature type="transmembrane region" description="Helical" evidence="1">
    <location>
        <begin position="86"/>
        <end position="106"/>
    </location>
</feature>
<feature type="transmembrane region" description="Helical" evidence="1">
    <location>
        <begin position="121"/>
        <end position="141"/>
    </location>
</feature>
<feature type="transmembrane region" description="Helical" evidence="1">
    <location>
        <begin position="179"/>
        <end position="199"/>
    </location>
</feature>
<feature type="transmembrane region" description="Helical" evidence="1">
    <location>
        <begin position="203"/>
        <end position="223"/>
    </location>
</feature>
<feature type="transmembrane region" description="Helical" evidence="1">
    <location>
        <begin position="281"/>
        <end position="301"/>
    </location>
</feature>
<feature type="transmembrane region" description="Helical" evidence="1">
    <location>
        <begin position="350"/>
        <end position="370"/>
    </location>
</feature>
<feature type="transmembrane region" description="Helical" evidence="1">
    <location>
        <begin position="385"/>
        <end position="405"/>
    </location>
</feature>
<feature type="transmembrane region" description="Helical" evidence="1">
    <location>
        <begin position="431"/>
        <end position="451"/>
    </location>
</feature>
<feature type="transmembrane region" description="Helical" evidence="1">
    <location>
        <begin position="460"/>
        <end position="480"/>
    </location>
</feature>
<feature type="splice variant" id="VSP_026653" description="In isoform 2." evidence="2">
    <original>LNPLNILGINFLGRRLSLS</original>
    <variation>CKIAHVPALFQAGFLQLRD</variation>
    <location>
        <begin position="359"/>
        <end position="377"/>
    </location>
</feature>
<feature type="splice variant" id="VSP_026654" description="In isoform 2." evidence="2">
    <location>
        <begin position="378"/>
        <end position="494"/>
    </location>
</feature>
<dbReference type="EMBL" id="AK034997">
    <property type="protein sequence ID" value="BAC28908.1"/>
    <property type="molecule type" value="mRNA"/>
</dbReference>
<dbReference type="EMBL" id="AK137043">
    <property type="protein sequence ID" value="BAE23214.1"/>
    <property type="molecule type" value="mRNA"/>
</dbReference>
<dbReference type="EMBL" id="BC058741">
    <property type="protein sequence ID" value="AAH58741.1"/>
    <property type="molecule type" value="mRNA"/>
</dbReference>
<dbReference type="CCDS" id="CCDS20009.2">
    <molecule id="Q6PDF3-1"/>
</dbReference>
<dbReference type="RefSeq" id="NP_796174.2">
    <molecule id="Q6PDF3-1"/>
    <property type="nucleotide sequence ID" value="NM_177200.4"/>
</dbReference>
<dbReference type="SMR" id="Q6PDF3"/>
<dbReference type="FunCoup" id="Q6PDF3">
    <property type="interactions" value="32"/>
</dbReference>
<dbReference type="STRING" id="10090.ENSMUSP00000093743"/>
<dbReference type="GlyGen" id="Q6PDF3">
    <property type="glycosylation" value="1 site"/>
</dbReference>
<dbReference type="iPTMnet" id="Q6PDF3"/>
<dbReference type="PhosphoSitePlus" id="Q6PDF3"/>
<dbReference type="PaxDb" id="10090-ENSMUSP00000093743"/>
<dbReference type="ProteomicsDB" id="254725">
    <molecule id="Q6PDF3-1"/>
</dbReference>
<dbReference type="ProteomicsDB" id="254726">
    <molecule id="Q6PDF3-2"/>
</dbReference>
<dbReference type="Antibodypedia" id="18208">
    <property type="antibodies" value="92 antibodies from 17 providers"/>
</dbReference>
<dbReference type="DNASU" id="320590"/>
<dbReference type="Ensembl" id="ENSMUST00000096040.11">
    <molecule id="Q6PDF3-1"/>
    <property type="protein sequence ID" value="ENSMUSP00000093743.5"/>
    <property type="gene ID" value="ENSMUSG00000029830.16"/>
</dbReference>
<dbReference type="GeneID" id="320590"/>
<dbReference type="KEGG" id="mmu:320590"/>
<dbReference type="UCSC" id="uc009bjm.1">
    <molecule id="Q6PDF3-1"/>
    <property type="organism name" value="mouse"/>
</dbReference>
<dbReference type="UCSC" id="uc009bjn.1">
    <molecule id="Q6PDF3-2"/>
    <property type="organism name" value="mouse"/>
</dbReference>
<dbReference type="AGR" id="MGI:2444335"/>
<dbReference type="CTD" id="136306"/>
<dbReference type="MGI" id="MGI:2444335">
    <property type="gene designation" value="Svopl"/>
</dbReference>
<dbReference type="VEuPathDB" id="HostDB:ENSMUSG00000029830"/>
<dbReference type="eggNOG" id="KOG0253">
    <property type="taxonomic scope" value="Eukaryota"/>
</dbReference>
<dbReference type="GeneTree" id="ENSGT00940000158632"/>
<dbReference type="HOGENOM" id="CLU_001265_46_0_1"/>
<dbReference type="InParanoid" id="Q6PDF3"/>
<dbReference type="OMA" id="PTWIGVC"/>
<dbReference type="OrthoDB" id="4139357at2759"/>
<dbReference type="PhylomeDB" id="Q6PDF3"/>
<dbReference type="TreeFam" id="TF313465"/>
<dbReference type="BioGRID-ORCS" id="320590">
    <property type="hits" value="1 hit in 78 CRISPR screens"/>
</dbReference>
<dbReference type="ChiTaRS" id="Svopl">
    <property type="organism name" value="mouse"/>
</dbReference>
<dbReference type="PRO" id="PR:Q6PDF3"/>
<dbReference type="Proteomes" id="UP000000589">
    <property type="component" value="Chromosome 6"/>
</dbReference>
<dbReference type="RNAct" id="Q6PDF3">
    <property type="molecule type" value="protein"/>
</dbReference>
<dbReference type="Bgee" id="ENSMUSG00000029830">
    <property type="expression patterns" value="Expressed in olfactory epithelium and 101 other cell types or tissues"/>
</dbReference>
<dbReference type="ExpressionAtlas" id="Q6PDF3">
    <property type="expression patterns" value="baseline and differential"/>
</dbReference>
<dbReference type="GO" id="GO:0016020">
    <property type="term" value="C:membrane"/>
    <property type="evidence" value="ECO:0007669"/>
    <property type="project" value="UniProtKB-SubCell"/>
</dbReference>
<dbReference type="GO" id="GO:0022857">
    <property type="term" value="F:transmembrane transporter activity"/>
    <property type="evidence" value="ECO:0007669"/>
    <property type="project" value="InterPro"/>
</dbReference>
<dbReference type="CDD" id="cd17442">
    <property type="entry name" value="MFS_SVOPL"/>
    <property type="match status" value="1"/>
</dbReference>
<dbReference type="Gene3D" id="1.20.1250.20">
    <property type="entry name" value="MFS general substrate transporter like domains"/>
    <property type="match status" value="1"/>
</dbReference>
<dbReference type="InterPro" id="IPR020846">
    <property type="entry name" value="MFS_dom"/>
</dbReference>
<dbReference type="InterPro" id="IPR005828">
    <property type="entry name" value="MFS_sugar_transport-like"/>
</dbReference>
<dbReference type="InterPro" id="IPR036259">
    <property type="entry name" value="MFS_trans_sf"/>
</dbReference>
<dbReference type="PANTHER" id="PTHR23511:SF45">
    <property type="entry name" value="SVOP LIKE"/>
    <property type="match status" value="1"/>
</dbReference>
<dbReference type="PANTHER" id="PTHR23511">
    <property type="entry name" value="SYNAPTIC VESICLE GLYCOPROTEIN 2"/>
    <property type="match status" value="1"/>
</dbReference>
<dbReference type="Pfam" id="PF00083">
    <property type="entry name" value="Sugar_tr"/>
    <property type="match status" value="2"/>
</dbReference>
<dbReference type="SUPFAM" id="SSF103473">
    <property type="entry name" value="MFS general substrate transporter"/>
    <property type="match status" value="1"/>
</dbReference>
<dbReference type="PROSITE" id="PS50850">
    <property type="entry name" value="MFS"/>
    <property type="match status" value="1"/>
</dbReference>
<proteinExistence type="evidence at transcript level"/>
<comment type="subcellular location">
    <subcellularLocation>
        <location evidence="3">Membrane</location>
        <topology evidence="3">Multi-pass membrane protein</topology>
    </subcellularLocation>
</comment>
<comment type="alternative products">
    <event type="alternative splicing"/>
    <isoform>
        <id>Q6PDF3-1</id>
        <name>1</name>
        <sequence type="displayed"/>
    </isoform>
    <isoform>
        <id>Q6PDF3-2</id>
        <name>2</name>
        <sequence type="described" ref="VSP_026653 VSP_026654"/>
    </isoform>
</comment>
<comment type="similarity">
    <text evidence="3">Belongs to the major facilitator superfamily.</text>
</comment>
<evidence type="ECO:0000255" key="1"/>
<evidence type="ECO:0000303" key="2">
    <source>
    </source>
</evidence>
<evidence type="ECO:0000305" key="3"/>
<protein>
    <recommendedName>
        <fullName>Putative transporter SVOPL</fullName>
    </recommendedName>
    <alternativeName>
        <fullName>SVOP-like protein</fullName>
    </alternativeName>
</protein>
<organism>
    <name type="scientific">Mus musculus</name>
    <name type="common">Mouse</name>
    <dbReference type="NCBI Taxonomy" id="10090"/>
    <lineage>
        <taxon>Eukaryota</taxon>
        <taxon>Metazoa</taxon>
        <taxon>Chordata</taxon>
        <taxon>Craniata</taxon>
        <taxon>Vertebrata</taxon>
        <taxon>Euteleostomi</taxon>
        <taxon>Mammalia</taxon>
        <taxon>Eutheria</taxon>
        <taxon>Euarchontoglires</taxon>
        <taxon>Glires</taxon>
        <taxon>Rodentia</taxon>
        <taxon>Myomorpha</taxon>
        <taxon>Muroidea</taxon>
        <taxon>Muridae</taxon>
        <taxon>Murinae</taxon>
        <taxon>Mus</taxon>
        <taxon>Mus</taxon>
    </lineage>
</organism>
<name>SVOPL_MOUSE</name>
<sequence length="494" mass="54461">MAAKQTEPVTIISLRKLSQAAPEPQQKETKTFTVEDAVETIGFGRFHIALFLIMGSTGVVEAMEIMLIAVVSPVIRCEWQLENWQVAFVTTMVFFGYMVSSILFGLLADRYGRWKILLLSFLWGAYFSLLTSFSPSYIWFVFLRTMVGCGVSGHAQGLIIKTEFLPTKYRGYMLPLSQVFWLAGSLLIISMASVVIPTIGWRWLIRIASIPGIILIMAFKFIPESARFNVSTGNTQAALNTLESIAKMNRSVMPEGQLVEPILEKRGRFADLLDSKYLRTTLQIWIIWLGISFAYYGVILASAELLERDLVCGSKSESEPEVVETTGDSGEGLSPCYCHIFAPSDYRTMIISTLGEIALNPLNILGINFLGRRLSLSITMGCTALFFLLLNICTSSAGLIGFLFMLRALVAANFNTIYIYTAEVYPTPMRAIGMGTSGSLCRIGAMVAPFISQVLMSASFLGALCLFSSVCVVCAISAFTLPIETKGRALQQIK</sequence>
<accession>Q6PDF3</accession>
<accession>Q8BM44</accession>
<reference key="1">
    <citation type="journal article" date="2005" name="Science">
        <title>The transcriptional landscape of the mammalian genome.</title>
        <authorList>
            <person name="Carninci P."/>
            <person name="Kasukawa T."/>
            <person name="Katayama S."/>
            <person name="Gough J."/>
            <person name="Frith M.C."/>
            <person name="Maeda N."/>
            <person name="Oyama R."/>
            <person name="Ravasi T."/>
            <person name="Lenhard B."/>
            <person name="Wells C."/>
            <person name="Kodzius R."/>
            <person name="Shimokawa K."/>
            <person name="Bajic V.B."/>
            <person name="Brenner S.E."/>
            <person name="Batalov S."/>
            <person name="Forrest A.R."/>
            <person name="Zavolan M."/>
            <person name="Davis M.J."/>
            <person name="Wilming L.G."/>
            <person name="Aidinis V."/>
            <person name="Allen J.E."/>
            <person name="Ambesi-Impiombato A."/>
            <person name="Apweiler R."/>
            <person name="Aturaliya R.N."/>
            <person name="Bailey T.L."/>
            <person name="Bansal M."/>
            <person name="Baxter L."/>
            <person name="Beisel K.W."/>
            <person name="Bersano T."/>
            <person name="Bono H."/>
            <person name="Chalk A.M."/>
            <person name="Chiu K.P."/>
            <person name="Choudhary V."/>
            <person name="Christoffels A."/>
            <person name="Clutterbuck D.R."/>
            <person name="Crowe M.L."/>
            <person name="Dalla E."/>
            <person name="Dalrymple B.P."/>
            <person name="de Bono B."/>
            <person name="Della Gatta G."/>
            <person name="di Bernardo D."/>
            <person name="Down T."/>
            <person name="Engstrom P."/>
            <person name="Fagiolini M."/>
            <person name="Faulkner G."/>
            <person name="Fletcher C.F."/>
            <person name="Fukushima T."/>
            <person name="Furuno M."/>
            <person name="Futaki S."/>
            <person name="Gariboldi M."/>
            <person name="Georgii-Hemming P."/>
            <person name="Gingeras T.R."/>
            <person name="Gojobori T."/>
            <person name="Green R.E."/>
            <person name="Gustincich S."/>
            <person name="Harbers M."/>
            <person name="Hayashi Y."/>
            <person name="Hensch T.K."/>
            <person name="Hirokawa N."/>
            <person name="Hill D."/>
            <person name="Huminiecki L."/>
            <person name="Iacono M."/>
            <person name="Ikeo K."/>
            <person name="Iwama A."/>
            <person name="Ishikawa T."/>
            <person name="Jakt M."/>
            <person name="Kanapin A."/>
            <person name="Katoh M."/>
            <person name="Kawasawa Y."/>
            <person name="Kelso J."/>
            <person name="Kitamura H."/>
            <person name="Kitano H."/>
            <person name="Kollias G."/>
            <person name="Krishnan S.P."/>
            <person name="Kruger A."/>
            <person name="Kummerfeld S.K."/>
            <person name="Kurochkin I.V."/>
            <person name="Lareau L.F."/>
            <person name="Lazarevic D."/>
            <person name="Lipovich L."/>
            <person name="Liu J."/>
            <person name="Liuni S."/>
            <person name="McWilliam S."/>
            <person name="Madan Babu M."/>
            <person name="Madera M."/>
            <person name="Marchionni L."/>
            <person name="Matsuda H."/>
            <person name="Matsuzawa S."/>
            <person name="Miki H."/>
            <person name="Mignone F."/>
            <person name="Miyake S."/>
            <person name="Morris K."/>
            <person name="Mottagui-Tabar S."/>
            <person name="Mulder N."/>
            <person name="Nakano N."/>
            <person name="Nakauchi H."/>
            <person name="Ng P."/>
            <person name="Nilsson R."/>
            <person name="Nishiguchi S."/>
            <person name="Nishikawa S."/>
            <person name="Nori F."/>
            <person name="Ohara O."/>
            <person name="Okazaki Y."/>
            <person name="Orlando V."/>
            <person name="Pang K.C."/>
            <person name="Pavan W.J."/>
            <person name="Pavesi G."/>
            <person name="Pesole G."/>
            <person name="Petrovsky N."/>
            <person name="Piazza S."/>
            <person name="Reed J."/>
            <person name="Reid J.F."/>
            <person name="Ring B.Z."/>
            <person name="Ringwald M."/>
            <person name="Rost B."/>
            <person name="Ruan Y."/>
            <person name="Salzberg S.L."/>
            <person name="Sandelin A."/>
            <person name="Schneider C."/>
            <person name="Schoenbach C."/>
            <person name="Sekiguchi K."/>
            <person name="Semple C.A."/>
            <person name="Seno S."/>
            <person name="Sessa L."/>
            <person name="Sheng Y."/>
            <person name="Shibata Y."/>
            <person name="Shimada H."/>
            <person name="Shimada K."/>
            <person name="Silva D."/>
            <person name="Sinclair B."/>
            <person name="Sperling S."/>
            <person name="Stupka E."/>
            <person name="Sugiura K."/>
            <person name="Sultana R."/>
            <person name="Takenaka Y."/>
            <person name="Taki K."/>
            <person name="Tammoja K."/>
            <person name="Tan S.L."/>
            <person name="Tang S."/>
            <person name="Taylor M.S."/>
            <person name="Tegner J."/>
            <person name="Teichmann S.A."/>
            <person name="Ueda H.R."/>
            <person name="van Nimwegen E."/>
            <person name="Verardo R."/>
            <person name="Wei C.L."/>
            <person name="Yagi K."/>
            <person name="Yamanishi H."/>
            <person name="Zabarovsky E."/>
            <person name="Zhu S."/>
            <person name="Zimmer A."/>
            <person name="Hide W."/>
            <person name="Bult C."/>
            <person name="Grimmond S.M."/>
            <person name="Teasdale R.D."/>
            <person name="Liu E.T."/>
            <person name="Brusic V."/>
            <person name="Quackenbush J."/>
            <person name="Wahlestedt C."/>
            <person name="Mattick J.S."/>
            <person name="Hume D.A."/>
            <person name="Kai C."/>
            <person name="Sasaki D."/>
            <person name="Tomaru Y."/>
            <person name="Fukuda S."/>
            <person name="Kanamori-Katayama M."/>
            <person name="Suzuki M."/>
            <person name="Aoki J."/>
            <person name="Arakawa T."/>
            <person name="Iida J."/>
            <person name="Imamura K."/>
            <person name="Itoh M."/>
            <person name="Kato T."/>
            <person name="Kawaji H."/>
            <person name="Kawagashira N."/>
            <person name="Kawashima T."/>
            <person name="Kojima M."/>
            <person name="Kondo S."/>
            <person name="Konno H."/>
            <person name="Nakano K."/>
            <person name="Ninomiya N."/>
            <person name="Nishio T."/>
            <person name="Okada M."/>
            <person name="Plessy C."/>
            <person name="Shibata K."/>
            <person name="Shiraki T."/>
            <person name="Suzuki S."/>
            <person name="Tagami M."/>
            <person name="Waki K."/>
            <person name="Watahiki A."/>
            <person name="Okamura-Oho Y."/>
            <person name="Suzuki H."/>
            <person name="Kawai J."/>
            <person name="Hayashizaki Y."/>
        </authorList>
    </citation>
    <scope>NUCLEOTIDE SEQUENCE [LARGE SCALE MRNA] (ISOFORM 2)</scope>
    <source>
        <strain>C57BL/6J</strain>
        <tissue>Embryoid bodies</tissue>
    </source>
</reference>
<reference key="2">
    <citation type="journal article" date="2004" name="Genome Res.">
        <title>The status, quality, and expansion of the NIH full-length cDNA project: the Mammalian Gene Collection (MGC).</title>
        <authorList>
            <consortium name="The MGC Project Team"/>
        </authorList>
    </citation>
    <scope>NUCLEOTIDE SEQUENCE [LARGE SCALE MRNA] (ISOFORM 1)</scope>
    <source>
        <tissue>Olfactory epithelium</tissue>
    </source>
</reference>
<gene>
    <name type="primary">Svopl</name>
</gene>